<keyword id="KW-0028">Amino-acid biosynthesis</keyword>
<keyword id="KW-0100">Branched-chain amino acid biosynthesis</keyword>
<keyword id="KW-0808">Transferase</keyword>
<sequence>MSPQTHTLSVLVEAKPGVLARVAALFSRRGFNIESLAVGATEQKDMSRMTIVVSAEETPLEQITKQLNKLINVIKIVELEDGNSVSRELALIKVRADAGTRSQVIEAVNLFRAKVIDVSPEALTIEATGDRGKIEALLRVLEPSVSVRSSNREWCRCPGPRGIGTAK</sequence>
<reference key="1">
    <citation type="journal article" date="1996" name="Gene">
        <title>Cloning and sequencing of the ilvBNC gene cluster from Mycobacterium avium.</title>
        <authorList>
            <person name="Gusberti L."/>
            <person name="Cantoni R."/>
            <person name="de Rossi E."/>
            <person name="Branzoni M."/>
            <person name="Riccardi G."/>
        </authorList>
    </citation>
    <scope>NUCLEOTIDE SEQUENCE [GENOMIC DNA]</scope>
</reference>
<evidence type="ECO:0000250" key="1"/>
<evidence type="ECO:0000255" key="2">
    <source>
        <dbReference type="PROSITE-ProRule" id="PRU01007"/>
    </source>
</evidence>
<evidence type="ECO:0000305" key="3"/>
<accession>Q59499</accession>
<comment type="catalytic activity">
    <reaction>
        <text>2 pyruvate + H(+) = (2S)-2-acetolactate + CO2</text>
        <dbReference type="Rhea" id="RHEA:25249"/>
        <dbReference type="ChEBI" id="CHEBI:15361"/>
        <dbReference type="ChEBI" id="CHEBI:15378"/>
        <dbReference type="ChEBI" id="CHEBI:16526"/>
        <dbReference type="ChEBI" id="CHEBI:58476"/>
        <dbReference type="EC" id="2.2.1.6"/>
    </reaction>
</comment>
<comment type="pathway">
    <text>Amino-acid biosynthesis; L-isoleucine biosynthesis; L-isoleucine from 2-oxobutanoate: step 1/4.</text>
</comment>
<comment type="pathway">
    <text>Amino-acid biosynthesis; L-valine biosynthesis; L-valine from pyruvate: step 1/4.</text>
</comment>
<comment type="subunit">
    <text evidence="1">Dimer of large and small chains.</text>
</comment>
<comment type="similarity">
    <text evidence="3">Belongs to the acetolactate synthase small subunit family.</text>
</comment>
<dbReference type="EC" id="2.2.1.6"/>
<dbReference type="EMBL" id="L49392">
    <property type="protein sequence ID" value="AAB38427.1"/>
    <property type="molecule type" value="Genomic_DNA"/>
</dbReference>
<dbReference type="PIR" id="JC5165">
    <property type="entry name" value="JC5165"/>
</dbReference>
<dbReference type="SMR" id="Q59499"/>
<dbReference type="UniPathway" id="UPA00047">
    <property type="reaction ID" value="UER00055"/>
</dbReference>
<dbReference type="UniPathway" id="UPA00049">
    <property type="reaction ID" value="UER00059"/>
</dbReference>
<dbReference type="GO" id="GO:0005829">
    <property type="term" value="C:cytosol"/>
    <property type="evidence" value="ECO:0007669"/>
    <property type="project" value="TreeGrafter"/>
</dbReference>
<dbReference type="GO" id="GO:0003984">
    <property type="term" value="F:acetolactate synthase activity"/>
    <property type="evidence" value="ECO:0007669"/>
    <property type="project" value="UniProtKB-EC"/>
</dbReference>
<dbReference type="GO" id="GO:1990610">
    <property type="term" value="F:acetolactate synthase regulator activity"/>
    <property type="evidence" value="ECO:0007669"/>
    <property type="project" value="InterPro"/>
</dbReference>
<dbReference type="GO" id="GO:0009097">
    <property type="term" value="P:isoleucine biosynthetic process"/>
    <property type="evidence" value="ECO:0007669"/>
    <property type="project" value="UniProtKB-UniPathway"/>
</dbReference>
<dbReference type="GO" id="GO:0009099">
    <property type="term" value="P:L-valine biosynthetic process"/>
    <property type="evidence" value="ECO:0007669"/>
    <property type="project" value="UniProtKB-UniPathway"/>
</dbReference>
<dbReference type="CDD" id="cd04878">
    <property type="entry name" value="ACT_AHAS"/>
    <property type="match status" value="1"/>
</dbReference>
<dbReference type="FunFam" id="3.30.70.260:FF:000001">
    <property type="entry name" value="Acetolactate synthase, small subunit"/>
    <property type="match status" value="1"/>
</dbReference>
<dbReference type="Gene3D" id="3.30.70.260">
    <property type="match status" value="1"/>
</dbReference>
<dbReference type="Gene3D" id="3.30.70.1150">
    <property type="entry name" value="ACT-like. Chain A, domain 2"/>
    <property type="match status" value="1"/>
</dbReference>
<dbReference type="InterPro" id="IPR004789">
    <property type="entry name" value="Acetalactate_synth_ssu"/>
</dbReference>
<dbReference type="InterPro" id="IPR027271">
    <property type="entry name" value="Acetolactate_synth/TF_NikR_C"/>
</dbReference>
<dbReference type="InterPro" id="IPR019455">
    <property type="entry name" value="Acetolactate_synth_ssu_C"/>
</dbReference>
<dbReference type="InterPro" id="IPR045865">
    <property type="entry name" value="ACT-like_dom_sf"/>
</dbReference>
<dbReference type="InterPro" id="IPR002912">
    <property type="entry name" value="ACT_dom"/>
</dbReference>
<dbReference type="InterPro" id="IPR039557">
    <property type="entry name" value="AHAS_ACT"/>
</dbReference>
<dbReference type="InterPro" id="IPR054480">
    <property type="entry name" value="AHAS_small-like_ACT"/>
</dbReference>
<dbReference type="NCBIfam" id="TIGR00119">
    <property type="entry name" value="acolac_sm"/>
    <property type="match status" value="1"/>
</dbReference>
<dbReference type="NCBIfam" id="NF008864">
    <property type="entry name" value="PRK11895.1"/>
    <property type="match status" value="1"/>
</dbReference>
<dbReference type="PANTHER" id="PTHR30239">
    <property type="entry name" value="ACETOLACTATE SYNTHASE SMALL SUBUNIT"/>
    <property type="match status" value="1"/>
</dbReference>
<dbReference type="PANTHER" id="PTHR30239:SF0">
    <property type="entry name" value="ACETOLACTATE SYNTHASE SMALL SUBUNIT 1, CHLOROPLASTIC"/>
    <property type="match status" value="1"/>
</dbReference>
<dbReference type="Pfam" id="PF22629">
    <property type="entry name" value="ACT_AHAS_ss"/>
    <property type="match status" value="1"/>
</dbReference>
<dbReference type="Pfam" id="PF10369">
    <property type="entry name" value="ALS_ss_C"/>
    <property type="match status" value="1"/>
</dbReference>
<dbReference type="SUPFAM" id="SSF55021">
    <property type="entry name" value="ACT-like"/>
    <property type="match status" value="2"/>
</dbReference>
<dbReference type="PROSITE" id="PS51671">
    <property type="entry name" value="ACT"/>
    <property type="match status" value="1"/>
</dbReference>
<organism>
    <name type="scientific">Mycobacterium avium</name>
    <dbReference type="NCBI Taxonomy" id="1764"/>
    <lineage>
        <taxon>Bacteria</taxon>
        <taxon>Bacillati</taxon>
        <taxon>Actinomycetota</taxon>
        <taxon>Actinomycetes</taxon>
        <taxon>Mycobacteriales</taxon>
        <taxon>Mycobacteriaceae</taxon>
        <taxon>Mycobacterium</taxon>
        <taxon>Mycobacterium avium complex (MAC)</taxon>
    </lineage>
</organism>
<name>ILVH_MYCAV</name>
<protein>
    <recommendedName>
        <fullName>Acetolactate synthase small subunit</fullName>
        <ecNumber>2.2.1.6</ecNumber>
    </recommendedName>
    <alternativeName>
        <fullName>Acetohydroxy-acid synthase small subunit</fullName>
        <shortName>AHAS</shortName>
        <shortName>ALS</shortName>
    </alternativeName>
</protein>
<gene>
    <name type="primary">ilvH</name>
    <name type="synonym">ilvN</name>
</gene>
<proteinExistence type="inferred from homology"/>
<feature type="chain" id="PRO_0000151414" description="Acetolactate synthase small subunit">
    <location>
        <begin position="1"/>
        <end position="167"/>
    </location>
</feature>
<feature type="domain" description="ACT" evidence="2">
    <location>
        <begin position="7"/>
        <end position="81"/>
    </location>
</feature>